<dbReference type="EMBL" id="CP000863">
    <property type="protein sequence ID" value="ACC57696.1"/>
    <property type="molecule type" value="Genomic_DNA"/>
</dbReference>
<dbReference type="RefSeq" id="WP_000559183.1">
    <property type="nucleotide sequence ID" value="NZ_CP031380.1"/>
</dbReference>
<dbReference type="SMR" id="B2HUB2"/>
<dbReference type="GeneID" id="92894422"/>
<dbReference type="KEGG" id="abc:ACICU_02384"/>
<dbReference type="HOGENOM" id="CLU_007831_2_2_6"/>
<dbReference type="Proteomes" id="UP000008839">
    <property type="component" value="Chromosome"/>
</dbReference>
<dbReference type="GO" id="GO:0005829">
    <property type="term" value="C:cytosol"/>
    <property type="evidence" value="ECO:0007669"/>
    <property type="project" value="TreeGrafter"/>
</dbReference>
<dbReference type="GO" id="GO:0050660">
    <property type="term" value="F:flavin adenine dinucleotide binding"/>
    <property type="evidence" value="ECO:0007669"/>
    <property type="project" value="UniProtKB-UniRule"/>
</dbReference>
<dbReference type="GO" id="GO:0030488">
    <property type="term" value="P:tRNA methylation"/>
    <property type="evidence" value="ECO:0007669"/>
    <property type="project" value="TreeGrafter"/>
</dbReference>
<dbReference type="GO" id="GO:0002098">
    <property type="term" value="P:tRNA wobble uridine modification"/>
    <property type="evidence" value="ECO:0007669"/>
    <property type="project" value="InterPro"/>
</dbReference>
<dbReference type="FunFam" id="1.10.10.1800:FF:000001">
    <property type="entry name" value="tRNA uridine 5-carboxymethylaminomethyl modification enzyme MnmG"/>
    <property type="match status" value="1"/>
</dbReference>
<dbReference type="FunFam" id="1.10.150.570:FF:000001">
    <property type="entry name" value="tRNA uridine 5-carboxymethylaminomethyl modification enzyme MnmG"/>
    <property type="match status" value="1"/>
</dbReference>
<dbReference type="FunFam" id="3.50.50.60:FF:000002">
    <property type="entry name" value="tRNA uridine 5-carboxymethylaminomethyl modification enzyme MnmG"/>
    <property type="match status" value="1"/>
</dbReference>
<dbReference type="FunFam" id="3.50.50.60:FF:000010">
    <property type="entry name" value="tRNA uridine 5-carboxymethylaminomethyl modification enzyme MnmG"/>
    <property type="match status" value="1"/>
</dbReference>
<dbReference type="Gene3D" id="3.50.50.60">
    <property type="entry name" value="FAD/NAD(P)-binding domain"/>
    <property type="match status" value="2"/>
</dbReference>
<dbReference type="Gene3D" id="1.10.150.570">
    <property type="entry name" value="GidA associated domain, C-terminal subdomain"/>
    <property type="match status" value="1"/>
</dbReference>
<dbReference type="Gene3D" id="1.10.10.1800">
    <property type="entry name" value="tRNA uridine 5-carboxymethylaminomethyl modification enzyme MnmG/GidA"/>
    <property type="match status" value="1"/>
</dbReference>
<dbReference type="HAMAP" id="MF_00129">
    <property type="entry name" value="MnmG_GidA"/>
    <property type="match status" value="1"/>
</dbReference>
<dbReference type="InterPro" id="IPR036188">
    <property type="entry name" value="FAD/NAD-bd_sf"/>
</dbReference>
<dbReference type="InterPro" id="IPR049312">
    <property type="entry name" value="GIDA_C_N"/>
</dbReference>
<dbReference type="InterPro" id="IPR004416">
    <property type="entry name" value="MnmG"/>
</dbReference>
<dbReference type="InterPro" id="IPR002218">
    <property type="entry name" value="MnmG-rel"/>
</dbReference>
<dbReference type="InterPro" id="IPR020595">
    <property type="entry name" value="MnmG-rel_CS"/>
</dbReference>
<dbReference type="InterPro" id="IPR026904">
    <property type="entry name" value="MnmG_C"/>
</dbReference>
<dbReference type="InterPro" id="IPR047001">
    <property type="entry name" value="MnmG_C_subdom"/>
</dbReference>
<dbReference type="InterPro" id="IPR044920">
    <property type="entry name" value="MnmG_C_subdom_sf"/>
</dbReference>
<dbReference type="InterPro" id="IPR040131">
    <property type="entry name" value="MnmG_N"/>
</dbReference>
<dbReference type="NCBIfam" id="TIGR00136">
    <property type="entry name" value="mnmG_gidA"/>
    <property type="match status" value="1"/>
</dbReference>
<dbReference type="PANTHER" id="PTHR11806">
    <property type="entry name" value="GLUCOSE INHIBITED DIVISION PROTEIN A"/>
    <property type="match status" value="1"/>
</dbReference>
<dbReference type="PANTHER" id="PTHR11806:SF0">
    <property type="entry name" value="PROTEIN MTO1 HOMOLOG, MITOCHONDRIAL"/>
    <property type="match status" value="1"/>
</dbReference>
<dbReference type="Pfam" id="PF01134">
    <property type="entry name" value="GIDA"/>
    <property type="match status" value="1"/>
</dbReference>
<dbReference type="Pfam" id="PF21680">
    <property type="entry name" value="GIDA_C_1st"/>
    <property type="match status" value="1"/>
</dbReference>
<dbReference type="Pfam" id="PF13932">
    <property type="entry name" value="SAM_GIDA_C"/>
    <property type="match status" value="1"/>
</dbReference>
<dbReference type="SMART" id="SM01228">
    <property type="entry name" value="GIDA_assoc_3"/>
    <property type="match status" value="1"/>
</dbReference>
<dbReference type="SUPFAM" id="SSF51905">
    <property type="entry name" value="FAD/NAD(P)-binding domain"/>
    <property type="match status" value="1"/>
</dbReference>
<dbReference type="PROSITE" id="PS01280">
    <property type="entry name" value="GIDA_1"/>
    <property type="match status" value="1"/>
</dbReference>
<dbReference type="PROSITE" id="PS01281">
    <property type="entry name" value="GIDA_2"/>
    <property type="match status" value="1"/>
</dbReference>
<evidence type="ECO:0000255" key="1">
    <source>
        <dbReference type="HAMAP-Rule" id="MF_00129"/>
    </source>
</evidence>
<feature type="chain" id="PRO_1000095639" description="tRNA uridine 5-carboxymethylaminomethyl modification enzyme MnmG">
    <location>
        <begin position="1"/>
        <end position="626"/>
    </location>
</feature>
<feature type="binding site" evidence="1">
    <location>
        <begin position="13"/>
        <end position="18"/>
    </location>
    <ligand>
        <name>FAD</name>
        <dbReference type="ChEBI" id="CHEBI:57692"/>
    </ligand>
</feature>
<feature type="binding site" evidence="1">
    <location>
        <begin position="273"/>
        <end position="287"/>
    </location>
    <ligand>
        <name>NAD(+)</name>
        <dbReference type="ChEBI" id="CHEBI:57540"/>
    </ligand>
</feature>
<gene>
    <name evidence="1" type="primary">mnmG</name>
    <name evidence="1" type="synonym">gidA</name>
    <name type="ordered locus">ACICU_02384</name>
</gene>
<sequence>MHYPKVYDVIVIGGGHAGTEAALAAARMGRQTLLLTHNIETLGQMSCNPAIGGIGKSHLVREIDALGGAMALAADKGGIQFRILNSRKGAAVRATRAQADRVRYKAAIRETLENQANLDIFQQAADDLIVEGDTVKGVVTQMGIRFDAKTVVLTTGTFLGGVIHVGLEKSSGGRAGDPPSIALAQRLRELKLPVGRLKTGTPPRIDARSVDFSVMTPQPGDFPSPVMSFMGDVSMHPEQVNCYITHTNEKTHDIIRGGLDRSPMYTGVIEGVGPRYCPSIEDKIHRFSDKDSHQVFLEPEGLDTHELYPNGISTSLPFDVQFELVRSIRGMENAHILRPGYAIEYDYFNPQALKFTLETKAINGLYFAGQINGTTGYEEAGAQGLLAGLNAARRAWEQEEWTPKRDQAYMGVLVDDLITLGTKEPYRMFTSRAEYRLMLREDNADQRLTTIGRELGLVDDVRWAAYCEKMEAVERETSRLQHLWAAPNNPMGKKFVEMTGADLSKECSAIDLLKRPNINFGQIAELTGSEVSQQVGEQIEIAVKYEGYINRQHEDVAQLKRLEETKIPADFDYDVVSGLSREITQKLKTVRPETLAQASRIPGVTPAAVQLVMITIRKNNMTKKTA</sequence>
<reference key="1">
    <citation type="journal article" date="2008" name="Antimicrob. Agents Chemother.">
        <title>Whole-genome pyrosequencing of an epidemic multidrug-resistant Acinetobacter baumannii strain belonging to the European clone II group.</title>
        <authorList>
            <person name="Iacono M."/>
            <person name="Villa L."/>
            <person name="Fortini D."/>
            <person name="Bordoni R."/>
            <person name="Imperi F."/>
            <person name="Bonnal R.J."/>
            <person name="Sicheritz-Ponten T."/>
            <person name="De Bellis G."/>
            <person name="Visca P."/>
            <person name="Cassone A."/>
            <person name="Carattoli A."/>
        </authorList>
    </citation>
    <scope>NUCLEOTIDE SEQUENCE [LARGE SCALE GENOMIC DNA]</scope>
    <source>
        <strain>ACICU</strain>
    </source>
</reference>
<protein>
    <recommendedName>
        <fullName evidence="1">tRNA uridine 5-carboxymethylaminomethyl modification enzyme MnmG</fullName>
    </recommendedName>
    <alternativeName>
        <fullName evidence="1">Glucose-inhibited division protein A</fullName>
    </alternativeName>
</protein>
<organism>
    <name type="scientific">Acinetobacter baumannii (strain ACICU)</name>
    <dbReference type="NCBI Taxonomy" id="405416"/>
    <lineage>
        <taxon>Bacteria</taxon>
        <taxon>Pseudomonadati</taxon>
        <taxon>Pseudomonadota</taxon>
        <taxon>Gammaproteobacteria</taxon>
        <taxon>Moraxellales</taxon>
        <taxon>Moraxellaceae</taxon>
        <taxon>Acinetobacter</taxon>
        <taxon>Acinetobacter calcoaceticus/baumannii complex</taxon>
    </lineage>
</organism>
<comment type="function">
    <text evidence="1">NAD-binding protein involved in the addition of a carboxymethylaminomethyl (cmnm) group at the wobble position (U34) of certain tRNAs, forming tRNA-cmnm(5)s(2)U34.</text>
</comment>
<comment type="cofactor">
    <cofactor evidence="1">
        <name>FAD</name>
        <dbReference type="ChEBI" id="CHEBI:57692"/>
    </cofactor>
</comment>
<comment type="subunit">
    <text evidence="1">Homodimer. Heterotetramer of two MnmE and two MnmG subunits.</text>
</comment>
<comment type="subcellular location">
    <subcellularLocation>
        <location evidence="1">Cytoplasm</location>
    </subcellularLocation>
</comment>
<comment type="similarity">
    <text evidence="1">Belongs to the MnmG family.</text>
</comment>
<name>MNMG_ACIBC</name>
<accession>B2HUB2</accession>
<proteinExistence type="inferred from homology"/>
<keyword id="KW-0963">Cytoplasm</keyword>
<keyword id="KW-0274">FAD</keyword>
<keyword id="KW-0285">Flavoprotein</keyword>
<keyword id="KW-0520">NAD</keyword>
<keyword id="KW-0819">tRNA processing</keyword>